<sequence>MSCLIPENLRNPKKVHENRLPTRAYYYDQDIFESLNGPWAFALFDAPLDAPDAKNLDWETAKKWSTISVPSHWELQEDWKYGKPIYTNVQYPIPIDIPNPPTVNPTGVYARTFELDSKSIESFEHRLRFEGVDNCYELYVNGQYVGFNKGSRNGAEFDIQKYVSEGENLVVVKVFKWSDSTYIEDQDQWWLSGIYRDVSLLKLPKKAHIEDVRVTTTFVDSQYQDAELSVKVDVQGSSYDHINFTLYEPEDGSKVYDASSLLNEENGNTTFSTKEFISFSTKKNEETAFKINVKAPEHWTAENPTLYKYQLDLIGSDGSVIQSIKHHVGFRQVELKDGNITVNGKDILFRGVNRHDHHPRFGRAVPLDFVVRDLILMKKFNINAVRNSHYPNHPKVYDLFDKLGFWVIDEADLETHGVQEPFNRHTNLEAEYPDTKNKLYDVNAHYLSDNPEYEVAYLDRASQLVLRDVNHPSIIIWSLGNEACYGRNHKAMYKLIKQLDPTRLVHYEGDLNALSADIFSFMYPTFEIMERWRKNHTDENGKFEKPLILCEYGHAMGNGPGSLKEYQELFYKEKFYQGGFIWEWANHGIEFEDVSTADGKLHKAYAYGGDFKEEVHDGVFIMDGLCNSEHNPTPGLVEYKKVIEPVHIKIAHGSVTITNKHDFITTDHLLFIDKDTGKTIDVPSLKPEESVTIPSDTTYVVAVLKDDAGVLKAGHEIAWGQAELPLKVPDFVTETAEKAAKINDGKRYVSVESSGLHFILDKLLGKIESLKVKGKEISSKFEGSSITFWRPPTNNDEPRDFKNWKKYNIDLMKQNIHGVSVEKGSNGSLAVVTVNSRISPVVFYYGFETVQKYTIFANKINLNTSMKLTGEYQPPDFPRVGYEFWLGDSYESFEWLGRGPGESYPDKKESQRFGLYDSKDVEEFVYDYPQENGNHTDTHFLNIKFEGAGKLSIFQKEKPFNFKISDEYGVDEAAHACDVKRYGRHYLRLDHAIHGVGSEACGPAVLDQYRLKAQDFNFEFDLAFE</sequence>
<organism>
    <name type="scientific">Kluyveromyces lactis (strain ATCC 8585 / CBS 2359 / DSM 70799 / NBRC 1267 / NRRL Y-1140 / WM37)</name>
    <name type="common">Yeast</name>
    <name type="synonym">Candida sphaerica</name>
    <dbReference type="NCBI Taxonomy" id="284590"/>
    <lineage>
        <taxon>Eukaryota</taxon>
        <taxon>Fungi</taxon>
        <taxon>Dikarya</taxon>
        <taxon>Ascomycota</taxon>
        <taxon>Saccharomycotina</taxon>
        <taxon>Saccharomycetes</taxon>
        <taxon>Saccharomycetales</taxon>
        <taxon>Saccharomycetaceae</taxon>
        <taxon>Kluyveromyces</taxon>
    </lineage>
</organism>
<accession>P00723</accession>
<gene>
    <name type="primary">LAC4</name>
    <name type="ordered locus">KLLA0B14883g</name>
</gene>
<dbReference type="EC" id="3.2.1.23"/>
<dbReference type="EMBL" id="M84410">
    <property type="protein sequence ID" value="AAA35265.1"/>
    <property type="molecule type" value="Genomic_DNA"/>
</dbReference>
<dbReference type="EMBL" id="CR382122">
    <property type="protein sequence ID" value="CAH02587.1"/>
    <property type="molecule type" value="Genomic_DNA"/>
</dbReference>
<dbReference type="EMBL" id="X00430">
    <property type="protein sequence ID" value="CAA25128.1"/>
    <property type="molecule type" value="Genomic_DNA"/>
</dbReference>
<dbReference type="PIR" id="JC1266">
    <property type="entry name" value="JC1266"/>
</dbReference>
<dbReference type="RefSeq" id="XP_452194.1">
    <property type="nucleotide sequence ID" value="XM_452194.1"/>
</dbReference>
<dbReference type="PDB" id="3OB8">
    <property type="method" value="X-ray"/>
    <property type="resolution" value="2.80 A"/>
    <property type="chains" value="A/B/C/D=2-1025"/>
</dbReference>
<dbReference type="PDB" id="3OBA">
    <property type="method" value="X-ray"/>
    <property type="resolution" value="2.75 A"/>
    <property type="chains" value="A/B/C/D=2-1025"/>
</dbReference>
<dbReference type="PDBsum" id="3OB8"/>
<dbReference type="PDBsum" id="3OBA"/>
<dbReference type="SMR" id="P00723"/>
<dbReference type="STRING" id="284590.P00723"/>
<dbReference type="ChEMBL" id="CHEMBL3309040"/>
<dbReference type="CAZy" id="GH2">
    <property type="family name" value="Glycoside Hydrolase Family 2"/>
</dbReference>
<dbReference type="PaxDb" id="284590-P00723"/>
<dbReference type="KEGG" id="kla:KLLA0_B14883g"/>
<dbReference type="eggNOG" id="KOG2024">
    <property type="taxonomic scope" value="Eukaryota"/>
</dbReference>
<dbReference type="HOGENOM" id="CLU_002346_0_0_1"/>
<dbReference type="InParanoid" id="P00723"/>
<dbReference type="OMA" id="HYEADIY"/>
<dbReference type="BRENDA" id="3.2.1.23">
    <property type="organism ID" value="2825"/>
</dbReference>
<dbReference type="SABIO-RK" id="P00723"/>
<dbReference type="EvolutionaryTrace" id="P00723"/>
<dbReference type="Proteomes" id="UP000000598">
    <property type="component" value="Chromosome B"/>
</dbReference>
<dbReference type="GO" id="GO:0009341">
    <property type="term" value="C:beta-galactosidase complex"/>
    <property type="evidence" value="ECO:0007669"/>
    <property type="project" value="InterPro"/>
</dbReference>
<dbReference type="GO" id="GO:0004565">
    <property type="term" value="F:beta-galactosidase activity"/>
    <property type="evidence" value="ECO:0007669"/>
    <property type="project" value="UniProtKB-EC"/>
</dbReference>
<dbReference type="GO" id="GO:0030246">
    <property type="term" value="F:carbohydrate binding"/>
    <property type="evidence" value="ECO:0007669"/>
    <property type="project" value="InterPro"/>
</dbReference>
<dbReference type="GO" id="GO:0005990">
    <property type="term" value="P:lactose catabolic process"/>
    <property type="evidence" value="ECO:0007669"/>
    <property type="project" value="TreeGrafter"/>
</dbReference>
<dbReference type="Gene3D" id="2.70.98.10">
    <property type="match status" value="1"/>
</dbReference>
<dbReference type="Gene3D" id="2.60.120.260">
    <property type="entry name" value="Galactose-binding domain-like"/>
    <property type="match status" value="1"/>
</dbReference>
<dbReference type="Gene3D" id="3.20.20.80">
    <property type="entry name" value="Glycosidases"/>
    <property type="match status" value="1"/>
</dbReference>
<dbReference type="Gene3D" id="2.60.40.10">
    <property type="entry name" value="Immunoglobulins"/>
    <property type="match status" value="2"/>
</dbReference>
<dbReference type="InterPro" id="IPR004199">
    <property type="entry name" value="B-gal_small/dom_5"/>
</dbReference>
<dbReference type="InterPro" id="IPR050347">
    <property type="entry name" value="Bact_Beta-galactosidase"/>
</dbReference>
<dbReference type="InterPro" id="IPR036156">
    <property type="entry name" value="Beta-gal/glucu_dom_sf"/>
</dbReference>
<dbReference type="InterPro" id="IPR011013">
    <property type="entry name" value="Gal_mutarotase_sf_dom"/>
</dbReference>
<dbReference type="InterPro" id="IPR008979">
    <property type="entry name" value="Galactose-bd-like_sf"/>
</dbReference>
<dbReference type="InterPro" id="IPR014718">
    <property type="entry name" value="GH-type_carb-bd"/>
</dbReference>
<dbReference type="InterPro" id="IPR006101">
    <property type="entry name" value="Glyco_hydro_2"/>
</dbReference>
<dbReference type="InterPro" id="IPR023232">
    <property type="entry name" value="Glyco_hydro_2_AS"/>
</dbReference>
<dbReference type="InterPro" id="IPR006103">
    <property type="entry name" value="Glyco_hydro_2_cat"/>
</dbReference>
<dbReference type="InterPro" id="IPR023230">
    <property type="entry name" value="Glyco_hydro_2_CS"/>
</dbReference>
<dbReference type="InterPro" id="IPR006102">
    <property type="entry name" value="Glyco_hydro_2_Ig-like"/>
</dbReference>
<dbReference type="InterPro" id="IPR006104">
    <property type="entry name" value="Glyco_hydro_2_N"/>
</dbReference>
<dbReference type="InterPro" id="IPR017853">
    <property type="entry name" value="Glycoside_hydrolase_SF"/>
</dbReference>
<dbReference type="InterPro" id="IPR013783">
    <property type="entry name" value="Ig-like_fold"/>
</dbReference>
<dbReference type="InterPro" id="IPR032312">
    <property type="entry name" value="LacZ_4"/>
</dbReference>
<dbReference type="PANTHER" id="PTHR46323">
    <property type="entry name" value="BETA-GALACTOSIDASE"/>
    <property type="match status" value="1"/>
</dbReference>
<dbReference type="PANTHER" id="PTHR46323:SF2">
    <property type="entry name" value="BETA-GALACTOSIDASE"/>
    <property type="match status" value="1"/>
</dbReference>
<dbReference type="Pfam" id="PF02929">
    <property type="entry name" value="Bgal_small_N"/>
    <property type="match status" value="1"/>
</dbReference>
<dbReference type="Pfam" id="PF00703">
    <property type="entry name" value="Glyco_hydro_2"/>
    <property type="match status" value="1"/>
</dbReference>
<dbReference type="Pfam" id="PF02836">
    <property type="entry name" value="Glyco_hydro_2_C"/>
    <property type="match status" value="1"/>
</dbReference>
<dbReference type="Pfam" id="PF02837">
    <property type="entry name" value="Glyco_hydro_2_N"/>
    <property type="match status" value="1"/>
</dbReference>
<dbReference type="Pfam" id="PF16353">
    <property type="entry name" value="LacZ_4"/>
    <property type="match status" value="1"/>
</dbReference>
<dbReference type="PRINTS" id="PR00132">
    <property type="entry name" value="GLHYDRLASE2"/>
</dbReference>
<dbReference type="SMART" id="SM01038">
    <property type="entry name" value="Bgal_small_N"/>
    <property type="match status" value="1"/>
</dbReference>
<dbReference type="SUPFAM" id="SSF51445">
    <property type="entry name" value="(Trans)glycosidases"/>
    <property type="match status" value="1"/>
</dbReference>
<dbReference type="SUPFAM" id="SSF49303">
    <property type="entry name" value="beta-Galactosidase/glucuronidase domain"/>
    <property type="match status" value="2"/>
</dbReference>
<dbReference type="SUPFAM" id="SSF74650">
    <property type="entry name" value="Galactose mutarotase-like"/>
    <property type="match status" value="1"/>
</dbReference>
<dbReference type="SUPFAM" id="SSF49785">
    <property type="entry name" value="Galactose-binding domain-like"/>
    <property type="match status" value="1"/>
</dbReference>
<dbReference type="PROSITE" id="PS00719">
    <property type="entry name" value="GLYCOSYL_HYDROL_F2_1"/>
    <property type="match status" value="1"/>
</dbReference>
<dbReference type="PROSITE" id="PS00608">
    <property type="entry name" value="GLYCOSYL_HYDROL_F2_2"/>
    <property type="match status" value="1"/>
</dbReference>
<evidence type="ECO:0000250" key="1"/>
<evidence type="ECO:0000305" key="2"/>
<evidence type="ECO:0007829" key="3">
    <source>
        <dbReference type="PDB" id="3OB8"/>
    </source>
</evidence>
<evidence type="ECO:0007829" key="4">
    <source>
        <dbReference type="PDB" id="3OBA"/>
    </source>
</evidence>
<name>BGAL_KLULA</name>
<reference key="1">
    <citation type="journal article" date="1992" name="Gene">
        <title>Sequence of the Kluyveromyces lactis beta-galactosidase: comparison with prokaryotic enzymes and secondary structure analysis.</title>
        <authorList>
            <person name="Poch O."/>
            <person name="L'Hote H."/>
            <person name="Dallery V."/>
            <person name="Debeaux F."/>
            <person name="Fleer R."/>
            <person name="Sodoyer R."/>
        </authorList>
    </citation>
    <scope>NUCLEOTIDE SEQUENCE [GENOMIC DNA]</scope>
</reference>
<reference key="2">
    <citation type="journal article" date="2004" name="Nature">
        <title>Genome evolution in yeasts.</title>
        <authorList>
            <person name="Dujon B."/>
            <person name="Sherman D."/>
            <person name="Fischer G."/>
            <person name="Durrens P."/>
            <person name="Casaregola S."/>
            <person name="Lafontaine I."/>
            <person name="de Montigny J."/>
            <person name="Marck C."/>
            <person name="Neuveglise C."/>
            <person name="Talla E."/>
            <person name="Goffard N."/>
            <person name="Frangeul L."/>
            <person name="Aigle M."/>
            <person name="Anthouard V."/>
            <person name="Babour A."/>
            <person name="Barbe V."/>
            <person name="Barnay S."/>
            <person name="Blanchin S."/>
            <person name="Beckerich J.-M."/>
            <person name="Beyne E."/>
            <person name="Bleykasten C."/>
            <person name="Boisrame A."/>
            <person name="Boyer J."/>
            <person name="Cattolico L."/>
            <person name="Confanioleri F."/>
            <person name="de Daruvar A."/>
            <person name="Despons L."/>
            <person name="Fabre E."/>
            <person name="Fairhead C."/>
            <person name="Ferry-Dumazet H."/>
            <person name="Groppi A."/>
            <person name="Hantraye F."/>
            <person name="Hennequin C."/>
            <person name="Jauniaux N."/>
            <person name="Joyet P."/>
            <person name="Kachouri R."/>
            <person name="Kerrest A."/>
            <person name="Koszul R."/>
            <person name="Lemaire M."/>
            <person name="Lesur I."/>
            <person name="Ma L."/>
            <person name="Muller H."/>
            <person name="Nicaud J.-M."/>
            <person name="Nikolski M."/>
            <person name="Oztas S."/>
            <person name="Ozier-Kalogeropoulos O."/>
            <person name="Pellenz S."/>
            <person name="Potier S."/>
            <person name="Richard G.-F."/>
            <person name="Straub M.-L."/>
            <person name="Suleau A."/>
            <person name="Swennen D."/>
            <person name="Tekaia F."/>
            <person name="Wesolowski-Louvel M."/>
            <person name="Westhof E."/>
            <person name="Wirth B."/>
            <person name="Zeniou-Meyer M."/>
            <person name="Zivanovic Y."/>
            <person name="Bolotin-Fukuhara M."/>
            <person name="Thierry A."/>
            <person name="Bouchier C."/>
            <person name="Caudron B."/>
            <person name="Scarpelli C."/>
            <person name="Gaillardin C."/>
            <person name="Weissenbach J."/>
            <person name="Wincker P."/>
            <person name="Souciet J.-L."/>
        </authorList>
    </citation>
    <scope>NUCLEOTIDE SEQUENCE [LARGE SCALE GENOMIC DNA]</scope>
    <source>
        <strain>ATCC 8585 / CBS 2359 / DSM 70799 / NBRC 1267 / NRRL Y-1140 / WM37</strain>
    </source>
</reference>
<reference key="3">
    <citation type="journal article" date="1984" name="Nucleic Acids Res.">
        <title>Analysis of a eukaryotic beta-galactosidase gene: the N-terminal end of the yeast Kluyveromyces lactis protein shows homology to the Escherichia coli lacZ gene product.</title>
        <authorList>
            <person name="Breunig K.D."/>
            <person name="Dahlems U."/>
            <person name="Das S."/>
            <person name="Hollenberg C.P."/>
        </authorList>
    </citation>
    <scope>NUCLEOTIDE SEQUENCE [GENOMIC DNA] OF 1-119</scope>
</reference>
<feature type="chain" id="PRO_0000057663" description="Beta-galactosidase">
    <location>
        <begin position="1"/>
        <end position="1025"/>
    </location>
</feature>
<feature type="active site" description="Proton donor" evidence="1">
    <location>
        <position position="482"/>
    </location>
</feature>
<feature type="active site" description="Nucleophile" evidence="1">
    <location>
        <position position="551"/>
    </location>
</feature>
<feature type="helix" evidence="4">
    <location>
        <begin position="7"/>
        <end position="9"/>
    </location>
</feature>
<feature type="strand" evidence="4">
    <location>
        <begin position="16"/>
        <end position="18"/>
    </location>
</feature>
<feature type="turn" evidence="4">
    <location>
        <begin position="29"/>
        <end position="31"/>
    </location>
</feature>
<feature type="strand" evidence="4">
    <location>
        <begin position="32"/>
        <end position="34"/>
    </location>
</feature>
<feature type="strand" evidence="4">
    <location>
        <begin position="37"/>
        <end position="46"/>
    </location>
</feature>
<feature type="helix" evidence="4">
    <location>
        <begin position="47"/>
        <end position="49"/>
    </location>
</feature>
<feature type="helix" evidence="3">
    <location>
        <begin position="53"/>
        <end position="55"/>
    </location>
</feature>
<feature type="helix" evidence="4">
    <location>
        <begin position="58"/>
        <end position="61"/>
    </location>
</feature>
<feature type="strand" evidence="4">
    <location>
        <begin position="66"/>
        <end position="70"/>
    </location>
</feature>
<feature type="helix" evidence="4">
    <location>
        <begin position="77"/>
        <end position="79"/>
    </location>
</feature>
<feature type="strand" evidence="4">
    <location>
        <begin position="85"/>
        <end position="90"/>
    </location>
</feature>
<feature type="strand" evidence="4">
    <location>
        <begin position="106"/>
        <end position="115"/>
    </location>
</feature>
<feature type="helix" evidence="4">
    <location>
        <begin position="117"/>
        <end position="122"/>
    </location>
</feature>
<feature type="strand" evidence="4">
    <location>
        <begin position="123"/>
        <end position="130"/>
    </location>
</feature>
<feature type="strand" evidence="4">
    <location>
        <begin position="132"/>
        <end position="140"/>
    </location>
</feature>
<feature type="strand" evidence="4">
    <location>
        <begin position="143"/>
        <end position="149"/>
    </location>
</feature>
<feature type="strand" evidence="4">
    <location>
        <begin position="155"/>
        <end position="158"/>
    </location>
</feature>
<feature type="turn" evidence="4">
    <location>
        <begin position="160"/>
        <end position="162"/>
    </location>
</feature>
<feature type="strand" evidence="4">
    <location>
        <begin position="165"/>
        <end position="176"/>
    </location>
</feature>
<feature type="helix" evidence="4">
    <location>
        <begin position="179"/>
        <end position="183"/>
    </location>
</feature>
<feature type="strand" evidence="4">
    <location>
        <begin position="187"/>
        <end position="190"/>
    </location>
</feature>
<feature type="strand" evidence="4">
    <location>
        <begin position="198"/>
        <end position="220"/>
    </location>
</feature>
<feature type="strand" evidence="4">
    <location>
        <begin position="225"/>
        <end position="237"/>
    </location>
</feature>
<feature type="strand" evidence="4">
    <location>
        <begin position="241"/>
        <end position="247"/>
    </location>
</feature>
<feature type="helix" evidence="4">
    <location>
        <begin position="258"/>
        <end position="262"/>
    </location>
</feature>
<feature type="strand" evidence="4">
    <location>
        <begin position="275"/>
        <end position="280"/>
    </location>
</feature>
<feature type="strand" evidence="4">
    <location>
        <begin position="287"/>
        <end position="295"/>
    </location>
</feature>
<feature type="strand" evidence="4">
    <location>
        <begin position="301"/>
        <end position="304"/>
    </location>
</feature>
<feature type="strand" evidence="4">
    <location>
        <begin position="306"/>
        <end position="314"/>
    </location>
</feature>
<feature type="strand" evidence="4">
    <location>
        <begin position="320"/>
        <end position="328"/>
    </location>
</feature>
<feature type="strand" evidence="4">
    <location>
        <begin position="333"/>
        <end position="336"/>
    </location>
</feature>
<feature type="strand" evidence="4">
    <location>
        <begin position="339"/>
        <end position="342"/>
    </location>
</feature>
<feature type="strand" evidence="4">
    <location>
        <begin position="349"/>
        <end position="353"/>
    </location>
</feature>
<feature type="turn" evidence="4">
    <location>
        <begin position="359"/>
        <end position="361"/>
    </location>
</feature>
<feature type="helix" evidence="4">
    <location>
        <begin position="367"/>
        <end position="379"/>
    </location>
</feature>
<feature type="strand" evidence="4">
    <location>
        <begin position="384"/>
        <end position="386"/>
    </location>
</feature>
<feature type="helix" evidence="4">
    <location>
        <begin position="396"/>
        <end position="403"/>
    </location>
</feature>
<feature type="strand" evidence="4">
    <location>
        <begin position="406"/>
        <end position="410"/>
    </location>
</feature>
<feature type="helix" evidence="4">
    <location>
        <begin position="416"/>
        <end position="419"/>
    </location>
</feature>
<feature type="helix" evidence="4">
    <location>
        <begin position="420"/>
        <end position="425"/>
    </location>
</feature>
<feature type="turn" evidence="4">
    <location>
        <begin position="433"/>
        <end position="436"/>
    </location>
</feature>
<feature type="helix" evidence="4">
    <location>
        <begin position="437"/>
        <end position="440"/>
    </location>
</feature>
<feature type="turn" evidence="4">
    <location>
        <begin position="441"/>
        <end position="443"/>
    </location>
</feature>
<feature type="helix" evidence="4">
    <location>
        <begin position="444"/>
        <end position="446"/>
    </location>
</feature>
<feature type="turn" evidence="4">
    <location>
        <begin position="447"/>
        <end position="449"/>
    </location>
</feature>
<feature type="helix" evidence="4">
    <location>
        <begin position="451"/>
        <end position="453"/>
    </location>
</feature>
<feature type="helix" evidence="4">
    <location>
        <begin position="454"/>
        <end position="468"/>
    </location>
</feature>
<feature type="strand" evidence="4">
    <location>
        <begin position="474"/>
        <end position="478"/>
    </location>
</feature>
<feature type="helix" evidence="4">
    <location>
        <begin position="487"/>
        <end position="499"/>
    </location>
</feature>
<feature type="strand" evidence="4">
    <location>
        <begin position="503"/>
        <end position="506"/>
    </location>
</feature>
<feature type="strand" evidence="4">
    <location>
        <begin position="517"/>
        <end position="523"/>
    </location>
</feature>
<feature type="helix" evidence="4">
    <location>
        <begin position="526"/>
        <end position="536"/>
    </location>
</feature>
<feature type="strand" evidence="4">
    <location>
        <begin position="543"/>
        <end position="545"/>
    </location>
</feature>
<feature type="strand" evidence="4">
    <location>
        <begin position="547"/>
        <end position="553"/>
    </location>
</feature>
<feature type="helix" evidence="4">
    <location>
        <begin position="563"/>
        <end position="572"/>
    </location>
</feature>
<feature type="strand" evidence="4">
    <location>
        <begin position="576"/>
        <end position="582"/>
    </location>
</feature>
<feature type="strand" evidence="4">
    <location>
        <begin position="589"/>
        <end position="594"/>
    </location>
</feature>
<feature type="turn" evidence="4">
    <location>
        <begin position="596"/>
        <end position="598"/>
    </location>
</feature>
<feature type="strand" evidence="4">
    <location>
        <begin position="599"/>
        <end position="606"/>
    </location>
</feature>
<feature type="turn" evidence="4">
    <location>
        <begin position="608"/>
        <end position="611"/>
    </location>
</feature>
<feature type="helix" evidence="4">
    <location>
        <begin position="618"/>
        <end position="621"/>
    </location>
</feature>
<feature type="helix" evidence="4">
    <location>
        <begin position="634"/>
        <end position="642"/>
    </location>
</feature>
<feature type="strand" evidence="4">
    <location>
        <begin position="645"/>
        <end position="651"/>
    </location>
</feature>
<feature type="strand" evidence="4">
    <location>
        <begin position="654"/>
        <end position="659"/>
    </location>
</feature>
<feature type="strand" evidence="4">
    <location>
        <begin position="669"/>
        <end position="673"/>
    </location>
</feature>
<feature type="turn" evidence="4">
    <location>
        <begin position="674"/>
        <end position="676"/>
    </location>
</feature>
<feature type="strand" evidence="4">
    <location>
        <begin position="690"/>
        <end position="694"/>
    </location>
</feature>
<feature type="strand" evidence="4">
    <location>
        <begin position="698"/>
        <end position="706"/>
    </location>
</feature>
<feature type="strand" evidence="4">
    <location>
        <begin position="716"/>
        <end position="721"/>
    </location>
</feature>
<feature type="strand" evidence="4">
    <location>
        <begin position="741"/>
        <end position="744"/>
    </location>
</feature>
<feature type="strand" evidence="4">
    <location>
        <begin position="746"/>
        <end position="753"/>
    </location>
</feature>
<feature type="strand" evidence="4">
    <location>
        <begin position="756"/>
        <end position="761"/>
    </location>
</feature>
<feature type="turn" evidence="4">
    <location>
        <begin position="762"/>
        <end position="765"/>
    </location>
</feature>
<feature type="strand" evidence="4">
    <location>
        <begin position="766"/>
        <end position="772"/>
    </location>
</feature>
<feature type="strand" evidence="4">
    <location>
        <begin position="775"/>
        <end position="779"/>
    </location>
</feature>
<feature type="strand" evidence="4">
    <location>
        <begin position="785"/>
        <end position="787"/>
    </location>
</feature>
<feature type="turn" evidence="4">
    <location>
        <begin position="794"/>
        <end position="799"/>
    </location>
</feature>
<feature type="helix" evidence="4">
    <location>
        <begin position="800"/>
        <end position="806"/>
    </location>
</feature>
<feature type="helix" evidence="4">
    <location>
        <begin position="809"/>
        <end position="811"/>
    </location>
</feature>
<feature type="strand" evidence="4">
    <location>
        <begin position="812"/>
        <end position="823"/>
    </location>
</feature>
<feature type="strand" evidence="4">
    <location>
        <begin position="829"/>
        <end position="840"/>
    </location>
</feature>
<feature type="strand" evidence="4">
    <location>
        <begin position="846"/>
        <end position="855"/>
    </location>
</feature>
<feature type="strand" evidence="4">
    <location>
        <begin position="857"/>
        <end position="872"/>
    </location>
</feature>
<feature type="strand" evidence="4">
    <location>
        <begin position="878"/>
        <end position="886"/>
    </location>
</feature>
<feature type="strand" evidence="4">
    <location>
        <begin position="890"/>
        <end position="898"/>
    </location>
</feature>
<feature type="strand" evidence="4">
    <location>
        <begin position="913"/>
        <end position="917"/>
    </location>
</feature>
<feature type="helix" evidence="4">
    <location>
        <begin position="918"/>
        <end position="920"/>
    </location>
</feature>
<feature type="strand" evidence="4">
    <location>
        <begin position="935"/>
        <end position="945"/>
    </location>
</feature>
<feature type="turn" evidence="4">
    <location>
        <begin position="946"/>
        <end position="948"/>
    </location>
</feature>
<feature type="strand" evidence="4">
    <location>
        <begin position="949"/>
        <end position="958"/>
    </location>
</feature>
<feature type="strand" evidence="4">
    <location>
        <begin position="960"/>
        <end position="968"/>
    </location>
</feature>
<feature type="turn" evidence="4">
    <location>
        <begin position="970"/>
        <end position="972"/>
    </location>
</feature>
<feature type="helix" evidence="4">
    <location>
        <begin position="976"/>
        <end position="978"/>
    </location>
</feature>
<feature type="strand" evidence="4">
    <location>
        <begin position="980"/>
        <end position="993"/>
    </location>
</feature>
<feature type="helix" evidence="4">
    <location>
        <begin position="999"/>
        <end position="1001"/>
    </location>
</feature>
<feature type="helix" evidence="4">
    <location>
        <begin position="1007"/>
        <end position="1009"/>
    </location>
</feature>
<feature type="strand" evidence="4">
    <location>
        <begin position="1016"/>
        <end position="1024"/>
    </location>
</feature>
<comment type="catalytic activity">
    <reaction>
        <text>Hydrolysis of terminal non-reducing beta-D-galactose residues in beta-D-galactosides.</text>
        <dbReference type="EC" id="3.2.1.23"/>
    </reaction>
</comment>
<comment type="similarity">
    <text evidence="2">Belongs to the glycosyl hydrolase 2 family.</text>
</comment>
<proteinExistence type="evidence at protein level"/>
<keyword id="KW-0002">3D-structure</keyword>
<keyword id="KW-0326">Glycosidase</keyword>
<keyword id="KW-0378">Hydrolase</keyword>
<keyword id="KW-1185">Reference proteome</keyword>
<protein>
    <recommendedName>
        <fullName>Beta-galactosidase</fullName>
        <shortName>Beta-gal</shortName>
        <ecNumber>3.2.1.23</ecNumber>
    </recommendedName>
    <alternativeName>
        <fullName>Lactase</fullName>
    </alternativeName>
</protein>